<accession>B0BRH4</accession>
<keyword id="KW-0131">Cell cycle</keyword>
<keyword id="KW-0132">Cell division</keyword>
<keyword id="KW-0997">Cell inner membrane</keyword>
<keyword id="KW-1003">Cell membrane</keyword>
<keyword id="KW-0133">Cell shape</keyword>
<keyword id="KW-0961">Cell wall biogenesis/degradation</keyword>
<keyword id="KW-0460">Magnesium</keyword>
<keyword id="KW-0472">Membrane</keyword>
<keyword id="KW-0479">Metal-binding</keyword>
<keyword id="KW-0573">Peptidoglycan synthesis</keyword>
<keyword id="KW-0808">Transferase</keyword>
<keyword id="KW-0812">Transmembrane</keyword>
<keyword id="KW-1133">Transmembrane helix</keyword>
<sequence length="360" mass="40126">MLVWLAEYLVQYNTAFNVVSYITFRAIMALLTAMGIGLWIGPEVIRRLQLLKFGQEVRNDGPESHFKKRGTPTMGGIMILIAIGVSTLLWADLRNSYVWFVLFVLFGYGAVGFVDDYWKIKRKNTDGLIARWKYFWLSVIALIAVFGIYAVGKDTAATQLVVPFFKDFMPQLGIFFIILSYFVIVGTSNAVNLTDGLDGLAIVPTIMVASAFALIAWATGNFNFAQYLHIPFVPNAGELVILCTAIVGAGLGFLWYNTYPAQVFMGDVGSLSLGGALGTIAVLVRQELLLVIMGGVFVVEALSVILQVGSYKLRQKRIFRMAPIHHHFELKGWPEPRVIVRFWIITLMLVLIGLVTLKLR</sequence>
<evidence type="ECO:0000255" key="1">
    <source>
        <dbReference type="HAMAP-Rule" id="MF_00038"/>
    </source>
</evidence>
<protein>
    <recommendedName>
        <fullName evidence="1">Phospho-N-acetylmuramoyl-pentapeptide-transferase</fullName>
        <ecNumber evidence="1">2.7.8.13</ecNumber>
    </recommendedName>
    <alternativeName>
        <fullName evidence="1">UDP-MurNAc-pentapeptide phosphotransferase</fullName>
    </alternativeName>
</protein>
<proteinExistence type="inferred from homology"/>
<comment type="function">
    <text evidence="1">Catalyzes the initial step of the lipid cycle reactions in the biosynthesis of the cell wall peptidoglycan: transfers peptidoglycan precursor phospho-MurNAc-pentapeptide from UDP-MurNAc-pentapeptide onto the lipid carrier undecaprenyl phosphate, yielding undecaprenyl-pyrophosphoryl-MurNAc-pentapeptide, known as lipid I.</text>
</comment>
<comment type="catalytic activity">
    <reaction evidence="1">
        <text>UDP-N-acetyl-alpha-D-muramoyl-L-alanyl-gamma-D-glutamyl-meso-2,6-diaminopimeloyl-D-alanyl-D-alanine + di-trans,octa-cis-undecaprenyl phosphate = di-trans,octa-cis-undecaprenyl diphospho-N-acetyl-alpha-D-muramoyl-L-alanyl-D-glutamyl-meso-2,6-diaminopimeloyl-D-alanyl-D-alanine + UMP</text>
        <dbReference type="Rhea" id="RHEA:28386"/>
        <dbReference type="ChEBI" id="CHEBI:57865"/>
        <dbReference type="ChEBI" id="CHEBI:60392"/>
        <dbReference type="ChEBI" id="CHEBI:61386"/>
        <dbReference type="ChEBI" id="CHEBI:61387"/>
        <dbReference type="EC" id="2.7.8.13"/>
    </reaction>
</comment>
<comment type="cofactor">
    <cofactor evidence="1">
        <name>Mg(2+)</name>
        <dbReference type="ChEBI" id="CHEBI:18420"/>
    </cofactor>
</comment>
<comment type="pathway">
    <text evidence="1">Cell wall biogenesis; peptidoglycan biosynthesis.</text>
</comment>
<comment type="subcellular location">
    <subcellularLocation>
        <location evidence="1">Cell inner membrane</location>
        <topology evidence="1">Multi-pass membrane protein</topology>
    </subcellularLocation>
</comment>
<comment type="similarity">
    <text evidence="1">Belongs to the glycosyltransferase 4 family. MraY subfamily.</text>
</comment>
<organism>
    <name type="scientific">Actinobacillus pleuropneumoniae serotype 3 (strain JL03)</name>
    <dbReference type="NCBI Taxonomy" id="434271"/>
    <lineage>
        <taxon>Bacteria</taxon>
        <taxon>Pseudomonadati</taxon>
        <taxon>Pseudomonadota</taxon>
        <taxon>Gammaproteobacteria</taxon>
        <taxon>Pasteurellales</taxon>
        <taxon>Pasteurellaceae</taxon>
        <taxon>Actinobacillus</taxon>
    </lineage>
</organism>
<name>MRAY_ACTPJ</name>
<reference key="1">
    <citation type="journal article" date="2008" name="PLoS ONE">
        <title>Genome biology of Actinobacillus pleuropneumoniae JL03, an isolate of serotype 3 prevalent in China.</title>
        <authorList>
            <person name="Xu Z."/>
            <person name="Zhou Y."/>
            <person name="Li L."/>
            <person name="Zhou R."/>
            <person name="Xiao S."/>
            <person name="Wan Y."/>
            <person name="Zhang S."/>
            <person name="Wang K."/>
            <person name="Li W."/>
            <person name="Li L."/>
            <person name="Jin H."/>
            <person name="Kang M."/>
            <person name="Dalai B."/>
            <person name="Li T."/>
            <person name="Liu L."/>
            <person name="Cheng Y."/>
            <person name="Zhang L."/>
            <person name="Xu T."/>
            <person name="Zheng H."/>
            <person name="Pu S."/>
            <person name="Wang B."/>
            <person name="Gu W."/>
            <person name="Zhang X.L."/>
            <person name="Zhu G.-F."/>
            <person name="Wang S."/>
            <person name="Zhao G.-P."/>
            <person name="Chen H."/>
        </authorList>
    </citation>
    <scope>NUCLEOTIDE SEQUENCE [LARGE SCALE GENOMIC DNA]</scope>
    <source>
        <strain>JL03</strain>
    </source>
</reference>
<dbReference type="EC" id="2.7.8.13" evidence="1"/>
<dbReference type="EMBL" id="CP000687">
    <property type="protein sequence ID" value="ABY68622.1"/>
    <property type="molecule type" value="Genomic_DNA"/>
</dbReference>
<dbReference type="RefSeq" id="WP_005595609.1">
    <property type="nucleotide sequence ID" value="NC_010278.1"/>
</dbReference>
<dbReference type="SMR" id="B0BRH4"/>
<dbReference type="GeneID" id="48598156"/>
<dbReference type="KEGG" id="apj:APJL_0016"/>
<dbReference type="HOGENOM" id="CLU_023982_0_0_6"/>
<dbReference type="UniPathway" id="UPA00219"/>
<dbReference type="Proteomes" id="UP000008547">
    <property type="component" value="Chromosome"/>
</dbReference>
<dbReference type="GO" id="GO:0005886">
    <property type="term" value="C:plasma membrane"/>
    <property type="evidence" value="ECO:0007669"/>
    <property type="project" value="UniProtKB-SubCell"/>
</dbReference>
<dbReference type="GO" id="GO:0046872">
    <property type="term" value="F:metal ion binding"/>
    <property type="evidence" value="ECO:0007669"/>
    <property type="project" value="UniProtKB-KW"/>
</dbReference>
<dbReference type="GO" id="GO:0008963">
    <property type="term" value="F:phospho-N-acetylmuramoyl-pentapeptide-transferase activity"/>
    <property type="evidence" value="ECO:0007669"/>
    <property type="project" value="UniProtKB-UniRule"/>
</dbReference>
<dbReference type="GO" id="GO:0051992">
    <property type="term" value="F:UDP-N-acetylmuramoyl-L-alanyl-D-glutamyl-meso-2,6-diaminopimelyl-D-alanyl-D-alanine:undecaprenyl-phosphate transferase activity"/>
    <property type="evidence" value="ECO:0007669"/>
    <property type="project" value="RHEA"/>
</dbReference>
<dbReference type="GO" id="GO:0051301">
    <property type="term" value="P:cell division"/>
    <property type="evidence" value="ECO:0007669"/>
    <property type="project" value="UniProtKB-KW"/>
</dbReference>
<dbReference type="GO" id="GO:0071555">
    <property type="term" value="P:cell wall organization"/>
    <property type="evidence" value="ECO:0007669"/>
    <property type="project" value="UniProtKB-KW"/>
</dbReference>
<dbReference type="GO" id="GO:0009252">
    <property type="term" value="P:peptidoglycan biosynthetic process"/>
    <property type="evidence" value="ECO:0007669"/>
    <property type="project" value="UniProtKB-UniRule"/>
</dbReference>
<dbReference type="GO" id="GO:0008360">
    <property type="term" value="P:regulation of cell shape"/>
    <property type="evidence" value="ECO:0007669"/>
    <property type="project" value="UniProtKB-KW"/>
</dbReference>
<dbReference type="CDD" id="cd06852">
    <property type="entry name" value="GT_MraY"/>
    <property type="match status" value="1"/>
</dbReference>
<dbReference type="HAMAP" id="MF_00038">
    <property type="entry name" value="MraY"/>
    <property type="match status" value="1"/>
</dbReference>
<dbReference type="InterPro" id="IPR000715">
    <property type="entry name" value="Glycosyl_transferase_4"/>
</dbReference>
<dbReference type="InterPro" id="IPR003524">
    <property type="entry name" value="PNAcMuramoyl-5peptid_Trfase"/>
</dbReference>
<dbReference type="InterPro" id="IPR018480">
    <property type="entry name" value="PNAcMuramoyl-5peptid_Trfase_CS"/>
</dbReference>
<dbReference type="NCBIfam" id="TIGR00445">
    <property type="entry name" value="mraY"/>
    <property type="match status" value="1"/>
</dbReference>
<dbReference type="PANTHER" id="PTHR22926">
    <property type="entry name" value="PHOSPHO-N-ACETYLMURAMOYL-PENTAPEPTIDE-TRANSFERASE"/>
    <property type="match status" value="1"/>
</dbReference>
<dbReference type="PANTHER" id="PTHR22926:SF5">
    <property type="entry name" value="PHOSPHO-N-ACETYLMURAMOYL-PENTAPEPTIDE-TRANSFERASE HOMOLOG"/>
    <property type="match status" value="1"/>
</dbReference>
<dbReference type="Pfam" id="PF00953">
    <property type="entry name" value="Glycos_transf_4"/>
    <property type="match status" value="1"/>
</dbReference>
<dbReference type="Pfam" id="PF10555">
    <property type="entry name" value="MraY_sig1"/>
    <property type="match status" value="1"/>
</dbReference>
<dbReference type="PROSITE" id="PS01347">
    <property type="entry name" value="MRAY_1"/>
    <property type="match status" value="1"/>
</dbReference>
<dbReference type="PROSITE" id="PS01348">
    <property type="entry name" value="MRAY_2"/>
    <property type="match status" value="1"/>
</dbReference>
<gene>
    <name evidence="1" type="primary">mraY</name>
    <name type="ordered locus">APJL_0016</name>
</gene>
<feature type="chain" id="PRO_1000090585" description="Phospho-N-acetylmuramoyl-pentapeptide-transferase">
    <location>
        <begin position="1"/>
        <end position="360"/>
    </location>
</feature>
<feature type="transmembrane region" description="Helical" evidence="1">
    <location>
        <begin position="21"/>
        <end position="41"/>
    </location>
</feature>
<feature type="transmembrane region" description="Helical" evidence="1">
    <location>
        <begin position="73"/>
        <end position="93"/>
    </location>
</feature>
<feature type="transmembrane region" description="Helical" evidence="1">
    <location>
        <begin position="98"/>
        <end position="118"/>
    </location>
</feature>
<feature type="transmembrane region" description="Helical" evidence="1">
    <location>
        <begin position="132"/>
        <end position="152"/>
    </location>
</feature>
<feature type="transmembrane region" description="Helical" evidence="1">
    <location>
        <begin position="168"/>
        <end position="188"/>
    </location>
</feature>
<feature type="transmembrane region" description="Helical" evidence="1">
    <location>
        <begin position="199"/>
        <end position="219"/>
    </location>
</feature>
<feature type="transmembrane region" description="Helical" evidence="1">
    <location>
        <begin position="236"/>
        <end position="256"/>
    </location>
</feature>
<feature type="transmembrane region" description="Helical" evidence="1">
    <location>
        <begin position="263"/>
        <end position="283"/>
    </location>
</feature>
<feature type="transmembrane region" description="Helical" evidence="1">
    <location>
        <begin position="288"/>
        <end position="308"/>
    </location>
</feature>
<feature type="transmembrane region" description="Helical" evidence="1">
    <location>
        <begin position="338"/>
        <end position="358"/>
    </location>
</feature>